<comment type="function">
    <text evidence="3 4">Major component of the transverse central element of synaptonemal complexes (SCS), formed between homologous chromosomes during meiotic prophase (PubMed:15944401). Requires SYCP1 in order to be incorporated into the central element (PubMed:15944401, PubMed:16968740). May have a role in the synaptonemal complex assembly, stabilization and recombination (PubMed:15944401).</text>
</comment>
<comment type="subunit">
    <text evidence="3 4 5 6">Homodimer (PubMed:15944401). Found in a complex with SYCP1 and SYCE2 (PubMed:15944401). Interacts with SYCP1, SYCE2 and SYCE3 (PubMed:15944401, PubMed:16968740, PubMed:21637789). Interacts with SIX6OS1 (PubMed:27796301).</text>
</comment>
<comment type="interaction">
    <interactant intactId="EBI-6128757">
        <id>Q9D495</id>
    </interactant>
    <interactant intactId="EBI-6128737">
        <id>B5KM66</id>
        <label>Syce3</label>
    </interactant>
    <organismsDiffer>false</organismsDiffer>
    <experiments>2</experiments>
</comment>
<comment type="subcellular location">
    <subcellularLocation>
        <location evidence="3">Nucleus</location>
    </subcellularLocation>
    <subcellularLocation>
        <location evidence="3 4">Chromosome</location>
    </subcellularLocation>
    <text evidence="3">Associates with chromatin. In prophase I stage of meiosis, localizes in the transverse central elements of the central region between lateral elements of the synaptonemal complexes. Found only where the chromosome cores are synapsed. Colocalizes with SYCE2 in the central elements.</text>
</comment>
<comment type="tissue specificity">
    <text evidence="3">Meiotic cells (at protein level). Expressed in the ovary and testis.</text>
</comment>
<comment type="developmental stage">
    <text evidence="3">Expressed in testis at 14 dpc and in oocytes at 18 dpc.</text>
</comment>
<comment type="similarity">
    <text evidence="7">Belongs to the SYCE family.</text>
</comment>
<proteinExistence type="evidence at protein level"/>
<keyword id="KW-0131">Cell cycle</keyword>
<keyword id="KW-0132">Cell division</keyword>
<keyword id="KW-0158">Chromosome</keyword>
<keyword id="KW-0175">Coiled coil</keyword>
<keyword id="KW-0469">Meiosis</keyword>
<keyword id="KW-0539">Nucleus</keyword>
<keyword id="KW-1185">Reference proteome</keyword>
<gene>
    <name type="primary">Syce1</name>
</gene>
<name>SYCE1_MOUSE</name>
<sequence length="329" mass="38205">MATRPQPLGMEPEGSADLLHGPEGARGQYGSTQKIEDLMDMVKKLQKVGSLEPRIEVLINRINEVQQAKKKASEELGEAQTVWDNLQKELDLLREEKVRLKDILNRKEETLRIMQLHCQEKESEAQRKHSMLQECKERISFLNSQIDKEKAKLRKLRLDFEEHLETLMSQHKDTLEFHKPEHLTKEMCVLDSSKEQLLKEEKLMKVKLEDVRQRLCALGGPEGSSSLIEGLFLRSHEAAAAMQMFKDENKKAEEFLEAAAQQHEQLQQRCHQLQQKRQRLKEELEKHGVQILAHSTQNEEDSSWRMASPKPVEVHEETAQDQERPSSRT</sequence>
<evidence type="ECO:0000255" key="1"/>
<evidence type="ECO:0000256" key="2">
    <source>
        <dbReference type="SAM" id="MobiDB-lite"/>
    </source>
</evidence>
<evidence type="ECO:0000269" key="3">
    <source>
    </source>
</evidence>
<evidence type="ECO:0000269" key="4">
    <source>
    </source>
</evidence>
<evidence type="ECO:0000269" key="5">
    <source>
    </source>
</evidence>
<evidence type="ECO:0000269" key="6">
    <source>
    </source>
</evidence>
<evidence type="ECO:0000305" key="7"/>
<reference key="1">
    <citation type="journal article" date="2005" name="Science">
        <title>The transcriptional landscape of the mammalian genome.</title>
        <authorList>
            <person name="Carninci P."/>
            <person name="Kasukawa T."/>
            <person name="Katayama S."/>
            <person name="Gough J."/>
            <person name="Frith M.C."/>
            <person name="Maeda N."/>
            <person name="Oyama R."/>
            <person name="Ravasi T."/>
            <person name="Lenhard B."/>
            <person name="Wells C."/>
            <person name="Kodzius R."/>
            <person name="Shimokawa K."/>
            <person name="Bajic V.B."/>
            <person name="Brenner S.E."/>
            <person name="Batalov S."/>
            <person name="Forrest A.R."/>
            <person name="Zavolan M."/>
            <person name="Davis M.J."/>
            <person name="Wilming L.G."/>
            <person name="Aidinis V."/>
            <person name="Allen J.E."/>
            <person name="Ambesi-Impiombato A."/>
            <person name="Apweiler R."/>
            <person name="Aturaliya R.N."/>
            <person name="Bailey T.L."/>
            <person name="Bansal M."/>
            <person name="Baxter L."/>
            <person name="Beisel K.W."/>
            <person name="Bersano T."/>
            <person name="Bono H."/>
            <person name="Chalk A.M."/>
            <person name="Chiu K.P."/>
            <person name="Choudhary V."/>
            <person name="Christoffels A."/>
            <person name="Clutterbuck D.R."/>
            <person name="Crowe M.L."/>
            <person name="Dalla E."/>
            <person name="Dalrymple B.P."/>
            <person name="de Bono B."/>
            <person name="Della Gatta G."/>
            <person name="di Bernardo D."/>
            <person name="Down T."/>
            <person name="Engstrom P."/>
            <person name="Fagiolini M."/>
            <person name="Faulkner G."/>
            <person name="Fletcher C.F."/>
            <person name="Fukushima T."/>
            <person name="Furuno M."/>
            <person name="Futaki S."/>
            <person name="Gariboldi M."/>
            <person name="Georgii-Hemming P."/>
            <person name="Gingeras T.R."/>
            <person name="Gojobori T."/>
            <person name="Green R.E."/>
            <person name="Gustincich S."/>
            <person name="Harbers M."/>
            <person name="Hayashi Y."/>
            <person name="Hensch T.K."/>
            <person name="Hirokawa N."/>
            <person name="Hill D."/>
            <person name="Huminiecki L."/>
            <person name="Iacono M."/>
            <person name="Ikeo K."/>
            <person name="Iwama A."/>
            <person name="Ishikawa T."/>
            <person name="Jakt M."/>
            <person name="Kanapin A."/>
            <person name="Katoh M."/>
            <person name="Kawasawa Y."/>
            <person name="Kelso J."/>
            <person name="Kitamura H."/>
            <person name="Kitano H."/>
            <person name="Kollias G."/>
            <person name="Krishnan S.P."/>
            <person name="Kruger A."/>
            <person name="Kummerfeld S.K."/>
            <person name="Kurochkin I.V."/>
            <person name="Lareau L.F."/>
            <person name="Lazarevic D."/>
            <person name="Lipovich L."/>
            <person name="Liu J."/>
            <person name="Liuni S."/>
            <person name="McWilliam S."/>
            <person name="Madan Babu M."/>
            <person name="Madera M."/>
            <person name="Marchionni L."/>
            <person name="Matsuda H."/>
            <person name="Matsuzawa S."/>
            <person name="Miki H."/>
            <person name="Mignone F."/>
            <person name="Miyake S."/>
            <person name="Morris K."/>
            <person name="Mottagui-Tabar S."/>
            <person name="Mulder N."/>
            <person name="Nakano N."/>
            <person name="Nakauchi H."/>
            <person name="Ng P."/>
            <person name="Nilsson R."/>
            <person name="Nishiguchi S."/>
            <person name="Nishikawa S."/>
            <person name="Nori F."/>
            <person name="Ohara O."/>
            <person name="Okazaki Y."/>
            <person name="Orlando V."/>
            <person name="Pang K.C."/>
            <person name="Pavan W.J."/>
            <person name="Pavesi G."/>
            <person name="Pesole G."/>
            <person name="Petrovsky N."/>
            <person name="Piazza S."/>
            <person name="Reed J."/>
            <person name="Reid J.F."/>
            <person name="Ring B.Z."/>
            <person name="Ringwald M."/>
            <person name="Rost B."/>
            <person name="Ruan Y."/>
            <person name="Salzberg S.L."/>
            <person name="Sandelin A."/>
            <person name="Schneider C."/>
            <person name="Schoenbach C."/>
            <person name="Sekiguchi K."/>
            <person name="Semple C.A."/>
            <person name="Seno S."/>
            <person name="Sessa L."/>
            <person name="Sheng Y."/>
            <person name="Shibata Y."/>
            <person name="Shimada H."/>
            <person name="Shimada K."/>
            <person name="Silva D."/>
            <person name="Sinclair B."/>
            <person name="Sperling S."/>
            <person name="Stupka E."/>
            <person name="Sugiura K."/>
            <person name="Sultana R."/>
            <person name="Takenaka Y."/>
            <person name="Taki K."/>
            <person name="Tammoja K."/>
            <person name="Tan S.L."/>
            <person name="Tang S."/>
            <person name="Taylor M.S."/>
            <person name="Tegner J."/>
            <person name="Teichmann S.A."/>
            <person name="Ueda H.R."/>
            <person name="van Nimwegen E."/>
            <person name="Verardo R."/>
            <person name="Wei C.L."/>
            <person name="Yagi K."/>
            <person name="Yamanishi H."/>
            <person name="Zabarovsky E."/>
            <person name="Zhu S."/>
            <person name="Zimmer A."/>
            <person name="Hide W."/>
            <person name="Bult C."/>
            <person name="Grimmond S.M."/>
            <person name="Teasdale R.D."/>
            <person name="Liu E.T."/>
            <person name="Brusic V."/>
            <person name="Quackenbush J."/>
            <person name="Wahlestedt C."/>
            <person name="Mattick J.S."/>
            <person name="Hume D.A."/>
            <person name="Kai C."/>
            <person name="Sasaki D."/>
            <person name="Tomaru Y."/>
            <person name="Fukuda S."/>
            <person name="Kanamori-Katayama M."/>
            <person name="Suzuki M."/>
            <person name="Aoki J."/>
            <person name="Arakawa T."/>
            <person name="Iida J."/>
            <person name="Imamura K."/>
            <person name="Itoh M."/>
            <person name="Kato T."/>
            <person name="Kawaji H."/>
            <person name="Kawagashira N."/>
            <person name="Kawashima T."/>
            <person name="Kojima M."/>
            <person name="Kondo S."/>
            <person name="Konno H."/>
            <person name="Nakano K."/>
            <person name="Ninomiya N."/>
            <person name="Nishio T."/>
            <person name="Okada M."/>
            <person name="Plessy C."/>
            <person name="Shibata K."/>
            <person name="Shiraki T."/>
            <person name="Suzuki S."/>
            <person name="Tagami M."/>
            <person name="Waki K."/>
            <person name="Watahiki A."/>
            <person name="Okamura-Oho Y."/>
            <person name="Suzuki H."/>
            <person name="Kawai J."/>
            <person name="Hayashizaki Y."/>
        </authorList>
    </citation>
    <scope>NUCLEOTIDE SEQUENCE [LARGE SCALE MRNA]</scope>
    <source>
        <strain>C57BL/6J</strain>
        <tissue>Testis</tissue>
    </source>
</reference>
<reference key="2">
    <citation type="journal article" date="2005" name="J. Cell Sci.">
        <title>Two novel proteins recruited by synaptonemal complex protein 1 (SYCP1) are at the center of meiosis.</title>
        <authorList>
            <person name="Costa Y."/>
            <person name="Speed R."/>
            <person name="Oellinger R."/>
            <person name="Alsheimer M."/>
            <person name="Semple C.A."/>
            <person name="Gautier P."/>
            <person name="Maratou K."/>
            <person name="Novak I."/>
            <person name="Hoeoeg C."/>
            <person name="Benavente R."/>
            <person name="Cooke H.J."/>
        </authorList>
    </citation>
    <scope>FUNCTION</scope>
    <scope>IDENTIFICATION IN A COMPLEX WITH SYCP1 AND SYCE2</scope>
    <scope>INTERACTION WITH SYCP1 AND SYCE2</scope>
    <scope>HOMODIMERIZATION</scope>
    <scope>SUBCELLULAR LOCATION</scope>
    <scope>DEVELOPMENTAL STAGE</scope>
    <scope>TISSUE SPECIFICITY</scope>
</reference>
<reference key="3">
    <citation type="journal article" date="2006" name="J. Cell Sci.">
        <title>Characterization of a novel meiosis-specific protein within the central element of the synaptonemal complex.</title>
        <authorList>
            <person name="Hamer G."/>
            <person name="Gell K."/>
            <person name="Kouznetsova A."/>
            <person name="Novak I."/>
            <person name="Benavente R."/>
            <person name="Hoeoeg C."/>
        </authorList>
    </citation>
    <scope>FUNCTION</scope>
    <scope>SUBCELLULAR LOCATION</scope>
    <scope>INTERACTION WITH SYCP1</scope>
</reference>
<reference key="4">
    <citation type="journal article" date="2010" name="Cell">
        <title>A tissue-specific atlas of mouse protein phosphorylation and expression.</title>
        <authorList>
            <person name="Huttlin E.L."/>
            <person name="Jedrychowski M.P."/>
            <person name="Elias J.E."/>
            <person name="Goswami T."/>
            <person name="Rad R."/>
            <person name="Beausoleil S.A."/>
            <person name="Villen J."/>
            <person name="Haas W."/>
            <person name="Sowa M.E."/>
            <person name="Gygi S.P."/>
        </authorList>
    </citation>
    <scope>IDENTIFICATION BY MASS SPECTROMETRY [LARGE SCALE ANALYSIS]</scope>
    <source>
        <tissue>Testis</tissue>
    </source>
</reference>
<reference key="5">
    <citation type="journal article" date="2011" name="PLoS Genet.">
        <title>A novel mouse synaptonemal complex protein is essential for loading of central element proteins, recombination, and fertility.</title>
        <authorList>
            <person name="Schramm S."/>
            <person name="Fraune J."/>
            <person name="Naumann R."/>
            <person name="Hernandez-Hernandez A."/>
            <person name="Hoog C."/>
            <person name="Cooke H.J."/>
            <person name="Alsheimer M."/>
            <person name="Benavente R."/>
        </authorList>
    </citation>
    <scope>INTERACTION WITH SYCE3</scope>
</reference>
<reference key="6">
    <citation type="journal article" date="2016" name="Nat. Commun.">
        <title>C14ORF39/SIX6OS1 is a constituent of the synaptonemal complex and is essential for mouse fertility.</title>
        <authorList>
            <person name="Gomez-H L."/>
            <person name="Felipe-Medina N."/>
            <person name="Sanchez-Martin M."/>
            <person name="Davies O.R."/>
            <person name="Ramos I."/>
            <person name="Garcia-Tunon I."/>
            <person name="de Rooij D.G."/>
            <person name="Dereli I."/>
            <person name="Toth A."/>
            <person name="Barbero J.L."/>
            <person name="Benavente R."/>
            <person name="Llano E."/>
            <person name="Pendas A.M."/>
        </authorList>
    </citation>
    <scope>INTERACTION WITH SIX6OS1</scope>
</reference>
<feature type="chain" id="PRO_0000261428" description="Synaptonemal complex central element protein 1">
    <location>
        <begin position="1"/>
        <end position="329"/>
    </location>
</feature>
<feature type="region of interest" description="Disordered" evidence="2">
    <location>
        <begin position="1"/>
        <end position="29"/>
    </location>
</feature>
<feature type="region of interest" description="Disordered" evidence="2">
    <location>
        <begin position="291"/>
        <end position="329"/>
    </location>
</feature>
<feature type="coiled-coil region" evidence="1">
    <location>
        <begin position="54"/>
        <end position="167"/>
    </location>
</feature>
<feature type="coiled-coil region" evidence="1">
    <location>
        <begin position="194"/>
        <end position="294"/>
    </location>
</feature>
<feature type="compositionally biased region" description="Basic and acidic residues" evidence="2">
    <location>
        <begin position="312"/>
        <end position="329"/>
    </location>
</feature>
<accession>Q9D495</accession>
<protein>
    <recommendedName>
        <fullName>Synaptonemal complex central element protein 1</fullName>
    </recommendedName>
</protein>
<organism>
    <name type="scientific">Mus musculus</name>
    <name type="common">Mouse</name>
    <dbReference type="NCBI Taxonomy" id="10090"/>
    <lineage>
        <taxon>Eukaryota</taxon>
        <taxon>Metazoa</taxon>
        <taxon>Chordata</taxon>
        <taxon>Craniata</taxon>
        <taxon>Vertebrata</taxon>
        <taxon>Euteleostomi</taxon>
        <taxon>Mammalia</taxon>
        <taxon>Eutheria</taxon>
        <taxon>Euarchontoglires</taxon>
        <taxon>Glires</taxon>
        <taxon>Rodentia</taxon>
        <taxon>Myomorpha</taxon>
        <taxon>Muroidea</taxon>
        <taxon>Muridae</taxon>
        <taxon>Murinae</taxon>
        <taxon>Mus</taxon>
        <taxon>Mus</taxon>
    </lineage>
</organism>
<dbReference type="EMBL" id="AK016694">
    <property type="protein sequence ID" value="BAB30383.1"/>
    <property type="molecule type" value="mRNA"/>
</dbReference>
<dbReference type="CCDS" id="CCDS52436.1"/>
<dbReference type="RefSeq" id="NP_001137237.1">
    <property type="nucleotide sequence ID" value="NM_001143765.1"/>
</dbReference>
<dbReference type="SMR" id="Q9D495"/>
<dbReference type="BioGRID" id="216471">
    <property type="interactions" value="7"/>
</dbReference>
<dbReference type="CORUM" id="Q9D495"/>
<dbReference type="FunCoup" id="Q9D495">
    <property type="interactions" value="141"/>
</dbReference>
<dbReference type="IntAct" id="Q9D495">
    <property type="interactions" value="1"/>
</dbReference>
<dbReference type="STRING" id="10090.ENSMUSP00000026553"/>
<dbReference type="iPTMnet" id="Q9D495"/>
<dbReference type="PhosphoSitePlus" id="Q9D495"/>
<dbReference type="SwissPalm" id="Q9D495"/>
<dbReference type="jPOST" id="Q9D495"/>
<dbReference type="PaxDb" id="10090-ENSMUSP00000026553"/>
<dbReference type="PeptideAtlas" id="Q9D495"/>
<dbReference type="ProteomicsDB" id="258683"/>
<dbReference type="Antibodypedia" id="46492">
    <property type="antibodies" value="71 antibodies from 19 providers"/>
</dbReference>
<dbReference type="Ensembl" id="ENSMUST00000026553.6">
    <property type="protein sequence ID" value="ENSMUSP00000026553.5"/>
    <property type="gene ID" value="ENSMUSG00000025480.6"/>
</dbReference>
<dbReference type="GeneID" id="74075"/>
<dbReference type="KEGG" id="mmu:74075"/>
<dbReference type="UCSC" id="uc009kid.2">
    <property type="organism name" value="mouse"/>
</dbReference>
<dbReference type="AGR" id="MGI:1921325"/>
<dbReference type="CTD" id="93426"/>
<dbReference type="MGI" id="MGI:1921325">
    <property type="gene designation" value="Syce1"/>
</dbReference>
<dbReference type="VEuPathDB" id="HostDB:ENSMUSG00000025480"/>
<dbReference type="eggNOG" id="ENOG502S24D">
    <property type="taxonomic scope" value="Eukaryota"/>
</dbReference>
<dbReference type="GeneTree" id="ENSGT00390000017352"/>
<dbReference type="HOGENOM" id="CLU_068366_0_0_1"/>
<dbReference type="InParanoid" id="Q9D495"/>
<dbReference type="OMA" id="EFHKPEQ"/>
<dbReference type="OrthoDB" id="8931744at2759"/>
<dbReference type="PhylomeDB" id="Q9D495"/>
<dbReference type="TreeFam" id="TF337303"/>
<dbReference type="BioGRID-ORCS" id="74075">
    <property type="hits" value="5 hits in 76 CRISPR screens"/>
</dbReference>
<dbReference type="ChiTaRS" id="Syce1">
    <property type="organism name" value="mouse"/>
</dbReference>
<dbReference type="PRO" id="PR:Q9D495"/>
<dbReference type="Proteomes" id="UP000000589">
    <property type="component" value="Chromosome 7"/>
</dbReference>
<dbReference type="RNAct" id="Q9D495">
    <property type="molecule type" value="protein"/>
</dbReference>
<dbReference type="Bgee" id="ENSMUSG00000025480">
    <property type="expression patterns" value="Expressed in seminiferous tubule of testis and 34 other cell types or tissues"/>
</dbReference>
<dbReference type="ExpressionAtlas" id="Q9D495">
    <property type="expression patterns" value="baseline and differential"/>
</dbReference>
<dbReference type="GO" id="GO:0000801">
    <property type="term" value="C:central element"/>
    <property type="evidence" value="ECO:0000314"/>
    <property type="project" value="HGNC-UCL"/>
</dbReference>
<dbReference type="GO" id="GO:0005694">
    <property type="term" value="C:chromosome"/>
    <property type="evidence" value="ECO:0000314"/>
    <property type="project" value="UniProtKB"/>
</dbReference>
<dbReference type="GO" id="GO:0005654">
    <property type="term" value="C:nucleoplasm"/>
    <property type="evidence" value="ECO:0000304"/>
    <property type="project" value="Reactome"/>
</dbReference>
<dbReference type="GO" id="GO:0000795">
    <property type="term" value="C:synaptonemal complex"/>
    <property type="evidence" value="ECO:0000250"/>
    <property type="project" value="MGI"/>
</dbReference>
<dbReference type="GO" id="GO:0051301">
    <property type="term" value="P:cell division"/>
    <property type="evidence" value="ECO:0007669"/>
    <property type="project" value="UniProtKB-KW"/>
</dbReference>
<dbReference type="GO" id="GO:0007130">
    <property type="term" value="P:synaptonemal complex assembly"/>
    <property type="evidence" value="ECO:0000305"/>
    <property type="project" value="MGI"/>
</dbReference>
<dbReference type="InterPro" id="IPR026676">
    <property type="entry name" value="SYCE1"/>
</dbReference>
<dbReference type="PANTHER" id="PTHR21731:SF0">
    <property type="entry name" value="SYNAPTONEMAL COMPLEX CENTRAL ELEMENT PROTEIN 1"/>
    <property type="match status" value="1"/>
</dbReference>
<dbReference type="PANTHER" id="PTHR21731">
    <property type="entry name" value="SYNAPTONEMAL COMPLEX CENTRAL ELEMENT PROTEIN 1-LIKE"/>
    <property type="match status" value="1"/>
</dbReference>
<dbReference type="Pfam" id="PF15233">
    <property type="entry name" value="SYCE1"/>
    <property type="match status" value="1"/>
</dbReference>